<accession>P37614</accession>
<accession>Q2M7C9</accession>
<evidence type="ECO:0000305" key="1"/>
<organism>
    <name type="scientific">Escherichia coli (strain K12)</name>
    <dbReference type="NCBI Taxonomy" id="83333"/>
    <lineage>
        <taxon>Bacteria</taxon>
        <taxon>Pseudomonadati</taxon>
        <taxon>Pseudomonadota</taxon>
        <taxon>Gammaproteobacteria</taxon>
        <taxon>Enterobacterales</taxon>
        <taxon>Enterobacteriaceae</taxon>
        <taxon>Escherichia</taxon>
    </lineage>
</organism>
<sequence length="89" mass="10252">MLINIGRLLMLCVWGFLILNLVHPFPRPLNIFVNVALIFTVLMHGMQLALLKSTLPKDGPQMTTAEKVRIFLFGVFELLAWQKKFKVKK</sequence>
<dbReference type="EMBL" id="X04398">
    <property type="status" value="NOT_ANNOTATED_CDS"/>
    <property type="molecule type" value="Genomic_DNA"/>
</dbReference>
<dbReference type="EMBL" id="U00039">
    <property type="protein sequence ID" value="AAB18441.1"/>
    <property type="status" value="ALT_INIT"/>
    <property type="molecule type" value="Genomic_DNA"/>
</dbReference>
<dbReference type="EMBL" id="U00096">
    <property type="protein sequence ID" value="AAC76491.1"/>
    <property type="molecule type" value="Genomic_DNA"/>
</dbReference>
<dbReference type="EMBL" id="AP009048">
    <property type="protein sequence ID" value="BAE77827.1"/>
    <property type="molecule type" value="Genomic_DNA"/>
</dbReference>
<dbReference type="PIR" id="E65143">
    <property type="entry name" value="E65143"/>
</dbReference>
<dbReference type="RefSeq" id="NP_417923.1">
    <property type="nucleotide sequence ID" value="NC_000913.3"/>
</dbReference>
<dbReference type="RefSeq" id="WP_001311191.1">
    <property type="nucleotide sequence ID" value="NZ_SSZK01000008.1"/>
</dbReference>
<dbReference type="BioGRID" id="4261965">
    <property type="interactions" value="13"/>
</dbReference>
<dbReference type="BioGRID" id="852285">
    <property type="interactions" value="1"/>
</dbReference>
<dbReference type="FunCoup" id="P37614">
    <property type="interactions" value="115"/>
</dbReference>
<dbReference type="IntAct" id="P37614">
    <property type="interactions" value="1"/>
</dbReference>
<dbReference type="STRING" id="511145.b3466"/>
<dbReference type="PaxDb" id="511145-b3466"/>
<dbReference type="EnsemblBacteria" id="AAC76491">
    <property type="protein sequence ID" value="AAC76491"/>
    <property type="gene ID" value="b3466"/>
</dbReference>
<dbReference type="GeneID" id="947976"/>
<dbReference type="KEGG" id="ecj:JW5683"/>
<dbReference type="KEGG" id="eco:b3466"/>
<dbReference type="KEGG" id="ecoc:C3026_18775"/>
<dbReference type="PATRIC" id="fig|511145.12.peg.3565"/>
<dbReference type="EchoBASE" id="EB2126"/>
<dbReference type="eggNOG" id="COG3776">
    <property type="taxonomic scope" value="Bacteria"/>
</dbReference>
<dbReference type="HOGENOM" id="CLU_159241_0_0_6"/>
<dbReference type="InParanoid" id="P37614"/>
<dbReference type="OMA" id="FGITCMM"/>
<dbReference type="OrthoDB" id="7062339at2"/>
<dbReference type="PhylomeDB" id="P37614"/>
<dbReference type="BioCyc" id="EcoCyc:EG12212-MONOMER"/>
<dbReference type="PRO" id="PR:P37614"/>
<dbReference type="Proteomes" id="UP000000625">
    <property type="component" value="Chromosome"/>
</dbReference>
<dbReference type="InterPro" id="IPR009525">
    <property type="entry name" value="DUF1145"/>
</dbReference>
<dbReference type="NCBIfam" id="NF008158">
    <property type="entry name" value="PRK10910.1"/>
    <property type="match status" value="1"/>
</dbReference>
<dbReference type="PANTHER" id="PTHR38775:SF1">
    <property type="entry name" value="INNER MEMBRANE PROTEIN"/>
    <property type="match status" value="1"/>
</dbReference>
<dbReference type="PANTHER" id="PTHR38775">
    <property type="entry name" value="INNER MEMBRANE PROTEIN-RELATED"/>
    <property type="match status" value="1"/>
</dbReference>
<dbReference type="Pfam" id="PF06611">
    <property type="entry name" value="DUF1145"/>
    <property type="match status" value="1"/>
</dbReference>
<proteinExistence type="predicted"/>
<protein>
    <recommendedName>
        <fullName>Uncharacterized protein YhhL</fullName>
    </recommendedName>
</protein>
<gene>
    <name type="primary">yhhL</name>
    <name type="ordered locus">b3466</name>
    <name type="ordered locus">JW5683</name>
</gene>
<reference key="1">
    <citation type="journal article" date="1986" name="Mol. Gen. Genet.">
        <title>A new cell division operon in Escherichia coli.</title>
        <authorList>
            <person name="Gill D.R."/>
            <person name="Hatfull G.F."/>
            <person name="Salmond G.P.C."/>
        </authorList>
    </citation>
    <scope>NUCLEOTIDE SEQUENCE [GENOMIC DNA]</scope>
    <source>
        <strain>K12</strain>
    </source>
</reference>
<reference key="2">
    <citation type="journal article" date="1994" name="Nucleic Acids Res.">
        <title>Analysis of the Escherichia coli genome. V. DNA sequence of the region from 76.0 to 81.5 minutes.</title>
        <authorList>
            <person name="Sofia H.J."/>
            <person name="Burland V."/>
            <person name="Daniels D.L."/>
            <person name="Plunkett G. III"/>
            <person name="Blattner F.R."/>
        </authorList>
    </citation>
    <scope>NUCLEOTIDE SEQUENCE [LARGE SCALE GENOMIC DNA]</scope>
    <source>
        <strain>K12 / MG1655 / ATCC 47076</strain>
    </source>
</reference>
<reference key="3">
    <citation type="journal article" date="1997" name="Science">
        <title>The complete genome sequence of Escherichia coli K-12.</title>
        <authorList>
            <person name="Blattner F.R."/>
            <person name="Plunkett G. III"/>
            <person name="Bloch C.A."/>
            <person name="Perna N.T."/>
            <person name="Burland V."/>
            <person name="Riley M."/>
            <person name="Collado-Vides J."/>
            <person name="Glasner J.D."/>
            <person name="Rode C.K."/>
            <person name="Mayhew G.F."/>
            <person name="Gregor J."/>
            <person name="Davis N.W."/>
            <person name="Kirkpatrick H.A."/>
            <person name="Goeden M.A."/>
            <person name="Rose D.J."/>
            <person name="Mau B."/>
            <person name="Shao Y."/>
        </authorList>
    </citation>
    <scope>NUCLEOTIDE SEQUENCE [LARGE SCALE GENOMIC DNA]</scope>
    <source>
        <strain>K12 / MG1655 / ATCC 47076</strain>
    </source>
</reference>
<reference key="4">
    <citation type="journal article" date="2006" name="Mol. Syst. Biol.">
        <title>Highly accurate genome sequences of Escherichia coli K-12 strains MG1655 and W3110.</title>
        <authorList>
            <person name="Hayashi K."/>
            <person name="Morooka N."/>
            <person name="Yamamoto Y."/>
            <person name="Fujita K."/>
            <person name="Isono K."/>
            <person name="Choi S."/>
            <person name="Ohtsubo E."/>
            <person name="Baba T."/>
            <person name="Wanner B.L."/>
            <person name="Mori H."/>
            <person name="Horiuchi T."/>
        </authorList>
    </citation>
    <scope>NUCLEOTIDE SEQUENCE [LARGE SCALE GENOMIC DNA]</scope>
    <source>
        <strain>K12 / W3110 / ATCC 27325 / DSM 5911</strain>
    </source>
</reference>
<keyword id="KW-1185">Reference proteome</keyword>
<comment type="sequence caution" evidence="1">
    <conflict type="erroneous initiation">
        <sequence resource="EMBL-CDS" id="AAB18441"/>
    </conflict>
</comment>
<feature type="chain" id="PRO_0000169554" description="Uncharacterized protein YhhL">
    <location>
        <begin position="1"/>
        <end position="89"/>
    </location>
</feature>
<name>YHHL_ECOLI</name>